<name>ADRO_MOUSE</name>
<proteinExistence type="evidence at protein level"/>
<feature type="transit peptide" description="Mitochondrion" evidence="1">
    <location>
        <begin position="1"/>
        <end position="34"/>
    </location>
</feature>
<feature type="chain" id="PRO_0000019421" description="NADPH:adrenodoxin oxidoreductase, mitochondrial">
    <location>
        <begin position="35"/>
        <end position="494"/>
    </location>
</feature>
<feature type="binding site" evidence="1">
    <location>
        <position position="51"/>
    </location>
    <ligand>
        <name>FAD</name>
        <dbReference type="ChEBI" id="CHEBI:57692"/>
    </ligand>
</feature>
<feature type="binding site" evidence="1">
    <location>
        <position position="72"/>
    </location>
    <ligand>
        <name>FAD</name>
        <dbReference type="ChEBI" id="CHEBI:57692"/>
    </ligand>
</feature>
<feature type="binding site" evidence="1">
    <location>
        <position position="80"/>
    </location>
    <ligand>
        <name>FAD</name>
        <dbReference type="ChEBI" id="CHEBI:57692"/>
    </ligand>
</feature>
<feature type="binding site" evidence="1">
    <location>
        <position position="116"/>
    </location>
    <ligand>
        <name>FAD</name>
        <dbReference type="ChEBI" id="CHEBI:57692"/>
    </ligand>
</feature>
<feature type="binding site" evidence="1">
    <location>
        <begin position="187"/>
        <end position="190"/>
    </location>
    <ligand>
        <name>NADP(+)</name>
        <dbReference type="ChEBI" id="CHEBI:58349"/>
    </ligand>
</feature>
<feature type="binding site" evidence="1">
    <location>
        <begin position="231"/>
        <end position="232"/>
    </location>
    <ligand>
        <name>NADP(+)</name>
        <dbReference type="ChEBI" id="CHEBI:58349"/>
    </ligand>
</feature>
<feature type="binding site" evidence="1">
    <location>
        <position position="243"/>
    </location>
    <ligand>
        <name>NADP(+)</name>
        <dbReference type="ChEBI" id="CHEBI:58349"/>
    </ligand>
</feature>
<feature type="binding site" evidence="1">
    <location>
        <position position="401"/>
    </location>
    <ligand>
        <name>FAD</name>
        <dbReference type="ChEBI" id="CHEBI:57692"/>
    </ligand>
</feature>
<feature type="binding site" evidence="1">
    <location>
        <begin position="408"/>
        <end position="410"/>
    </location>
    <ligand>
        <name>FAD</name>
        <dbReference type="ChEBI" id="CHEBI:57692"/>
    </ligand>
</feature>
<feature type="binding site" evidence="1">
    <location>
        <position position="408"/>
    </location>
    <ligand>
        <name>NADP(+)</name>
        <dbReference type="ChEBI" id="CHEBI:58349"/>
    </ligand>
</feature>
<feature type="modified residue" description="Phosphoserine" evidence="2">
    <location>
        <position position="313"/>
    </location>
</feature>
<feature type="mutagenesis site" description="Decreased NADPH-adrenodoxin reductase activity in tissues from homozygous mice. Homozygous mice show progressive impairment of posterior gait, and visual acuity defects with loss of retinal ganglion cells and abnormal myelination of optic nerve." evidence="4">
    <original>R</original>
    <variation>Q</variation>
    <location>
        <position position="389"/>
    </location>
</feature>
<evidence type="ECO:0000250" key="1">
    <source>
        <dbReference type="UniProtKB" id="P08165"/>
    </source>
</evidence>
<evidence type="ECO:0000250" key="2">
    <source>
        <dbReference type="UniProtKB" id="P22570"/>
    </source>
</evidence>
<evidence type="ECO:0000250" key="3">
    <source>
        <dbReference type="UniProtKB" id="P48360"/>
    </source>
</evidence>
<evidence type="ECO:0000269" key="4">
    <source>
    </source>
</evidence>
<evidence type="ECO:0000269" key="5">
    <source>
    </source>
</evidence>
<evidence type="ECO:0000305" key="6"/>
<accession>Q61578</accession>
<sequence length="494" mass="54202">MAPRCWHWWRWSAWSGLRPSPSRSTPTPGFCQKFSTQEKTPQICVVGSGPAGFYTAQHLLKHHTHAHVDIYEKQLVPFGLVRFGVAPDHPEVKNVINTFTQTARSDRCAFQGNVVVGRDVSVPELREAYHAVVLSYGAEDHQPLGIPGEELPGVVSARAFVGWYNGLPENQELAPDLSCDTAVILGQGNVALDVARILLTPPEHLEKTDITEAALGALRQSRVKTVWIVGRRGPLQVAFTIKELREMIQLPGTRPILDPSDFLGLQDRIKDVPRPRRRLTELLLRTATEKPGVEEAARQALASRAWGLRFFRSPQQVLPTPDGQRVAGIRLAVTSLEGVGESTRAVPTGDVEDLPCGLLLSSVGYKSRPIDPSVPFDPKLGVIPNTEGRVVNVPGLYCSGWVKRGPTGVITTTMTDSFLTSQALLEDLKAGLLPSGPRPGYVAIQALLSNRGVRPVSFSDWEKLDAEEVSRGQGTGKPREKLVDRREMLRLLGH</sequence>
<protein>
    <recommendedName>
        <fullName>NADPH:adrenodoxin oxidoreductase, mitochondrial</fullName>
        <shortName>AR</shortName>
        <shortName>Adrenodoxin reductase</shortName>
        <ecNumber evidence="1">1.18.1.6</ecNumber>
    </recommendedName>
    <alternativeName>
        <fullName>Ferredoxin--NADP(+) reductase</fullName>
        <shortName>Ferredoxin reductase</shortName>
    </alternativeName>
</protein>
<organism>
    <name type="scientific">Mus musculus</name>
    <name type="common">Mouse</name>
    <dbReference type="NCBI Taxonomy" id="10090"/>
    <lineage>
        <taxon>Eukaryota</taxon>
        <taxon>Metazoa</taxon>
        <taxon>Chordata</taxon>
        <taxon>Craniata</taxon>
        <taxon>Vertebrata</taxon>
        <taxon>Euteleostomi</taxon>
        <taxon>Mammalia</taxon>
        <taxon>Eutheria</taxon>
        <taxon>Euarchontoglires</taxon>
        <taxon>Glires</taxon>
        <taxon>Rodentia</taxon>
        <taxon>Myomorpha</taxon>
        <taxon>Muroidea</taxon>
        <taxon>Muridae</taxon>
        <taxon>Murinae</taxon>
        <taxon>Mus</taxon>
        <taxon>Mus</taxon>
    </lineage>
</organism>
<keyword id="KW-0153">Cholesterol metabolism</keyword>
<keyword id="KW-0249">Electron transport</keyword>
<keyword id="KW-0274">FAD</keyword>
<keyword id="KW-0285">Flavoprotein</keyword>
<keyword id="KW-0443">Lipid metabolism</keyword>
<keyword id="KW-0472">Membrane</keyword>
<keyword id="KW-0496">Mitochondrion</keyword>
<keyword id="KW-0999">Mitochondrion inner membrane</keyword>
<keyword id="KW-0521">NADP</keyword>
<keyword id="KW-0560">Oxidoreductase</keyword>
<keyword id="KW-0597">Phosphoprotein</keyword>
<keyword id="KW-1185">Reference proteome</keyword>
<keyword id="KW-0753">Steroid metabolism</keyword>
<keyword id="KW-1207">Sterol metabolism</keyword>
<keyword id="KW-0809">Transit peptide</keyword>
<keyword id="KW-0813">Transport</keyword>
<dbReference type="EC" id="1.18.1.6" evidence="1"/>
<dbReference type="EMBL" id="D49920">
    <property type="protein sequence ID" value="BAA08659.1"/>
    <property type="molecule type" value="mRNA"/>
</dbReference>
<dbReference type="CCDS" id="CCDS25625.1"/>
<dbReference type="PIR" id="S60028">
    <property type="entry name" value="S60028"/>
</dbReference>
<dbReference type="RefSeq" id="NP_032023.1">
    <property type="nucleotide sequence ID" value="NM_007997.2"/>
</dbReference>
<dbReference type="SMR" id="Q61578"/>
<dbReference type="BioGRID" id="199627">
    <property type="interactions" value="8"/>
</dbReference>
<dbReference type="FunCoup" id="Q61578">
    <property type="interactions" value="2289"/>
</dbReference>
<dbReference type="STRING" id="10090.ENSMUSP00000021078"/>
<dbReference type="GlyGen" id="Q61578">
    <property type="glycosylation" value="2 sites"/>
</dbReference>
<dbReference type="iPTMnet" id="Q61578"/>
<dbReference type="PhosphoSitePlus" id="Q61578"/>
<dbReference type="REPRODUCTION-2DPAGE" id="Q61578"/>
<dbReference type="jPOST" id="Q61578"/>
<dbReference type="PaxDb" id="10090-ENSMUSP00000021078"/>
<dbReference type="ProteomicsDB" id="296117"/>
<dbReference type="Pumba" id="Q61578"/>
<dbReference type="DNASU" id="14149"/>
<dbReference type="Ensembl" id="ENSMUST00000021078.3">
    <property type="protein sequence ID" value="ENSMUSP00000021078.3"/>
    <property type="gene ID" value="ENSMUSG00000018861.9"/>
</dbReference>
<dbReference type="GeneID" id="14149"/>
<dbReference type="KEGG" id="mmu:14149"/>
<dbReference type="UCSC" id="uc007mgy.1">
    <property type="organism name" value="mouse"/>
</dbReference>
<dbReference type="AGR" id="MGI:104724"/>
<dbReference type="CTD" id="2232"/>
<dbReference type="MGI" id="MGI:104724">
    <property type="gene designation" value="Fdxr"/>
</dbReference>
<dbReference type="VEuPathDB" id="HostDB:ENSMUSG00000018861"/>
<dbReference type="eggNOG" id="KOG1800">
    <property type="taxonomic scope" value="Eukaryota"/>
</dbReference>
<dbReference type="GeneTree" id="ENSGT00940000165377"/>
<dbReference type="HOGENOM" id="CLU_024722_3_1_1"/>
<dbReference type="InParanoid" id="Q61578"/>
<dbReference type="OMA" id="RFNFIGN"/>
<dbReference type="OrthoDB" id="333024at2759"/>
<dbReference type="PhylomeDB" id="Q61578"/>
<dbReference type="TreeFam" id="TF314193"/>
<dbReference type="Reactome" id="R-MMU-196108">
    <property type="pathway name" value="Pregnenolone biosynthesis"/>
</dbReference>
<dbReference type="Reactome" id="R-MMU-211976">
    <property type="pathway name" value="Endogenous sterols"/>
</dbReference>
<dbReference type="Reactome" id="R-MMU-2395516">
    <property type="pathway name" value="Electron transport from NADPH to Ferredoxin"/>
</dbReference>
<dbReference type="UniPathway" id="UPA00296"/>
<dbReference type="BioGRID-ORCS" id="14149">
    <property type="hits" value="27 hits in 80 CRISPR screens"/>
</dbReference>
<dbReference type="ChiTaRS" id="Fdxr">
    <property type="organism name" value="mouse"/>
</dbReference>
<dbReference type="PRO" id="PR:Q61578"/>
<dbReference type="Proteomes" id="UP000000589">
    <property type="component" value="Chromosome 11"/>
</dbReference>
<dbReference type="RNAct" id="Q61578">
    <property type="molecule type" value="protein"/>
</dbReference>
<dbReference type="Bgee" id="ENSMUSG00000018861">
    <property type="expression patterns" value="Expressed in adrenal gland and 153 other cell types or tissues"/>
</dbReference>
<dbReference type="GO" id="GO:0005743">
    <property type="term" value="C:mitochondrial inner membrane"/>
    <property type="evidence" value="ECO:0007005"/>
    <property type="project" value="MGI"/>
</dbReference>
<dbReference type="GO" id="GO:0005739">
    <property type="term" value="C:mitochondrion"/>
    <property type="evidence" value="ECO:0007005"/>
    <property type="project" value="MGI"/>
</dbReference>
<dbReference type="GO" id="GO:0004324">
    <property type="term" value="F:ferredoxin-NADP+ reductase activity"/>
    <property type="evidence" value="ECO:0000250"/>
    <property type="project" value="UniProtKB"/>
</dbReference>
<dbReference type="GO" id="GO:0070402">
    <property type="term" value="F:NADPH binding"/>
    <property type="evidence" value="ECO:0007669"/>
    <property type="project" value="Ensembl"/>
</dbReference>
<dbReference type="GO" id="GO:0008203">
    <property type="term" value="P:cholesterol metabolic process"/>
    <property type="evidence" value="ECO:0007669"/>
    <property type="project" value="UniProtKB-UniPathway"/>
</dbReference>
<dbReference type="GO" id="GO:0006744">
    <property type="term" value="P:ubiquinone biosynthetic process"/>
    <property type="evidence" value="ECO:0000250"/>
    <property type="project" value="UniProtKB"/>
</dbReference>
<dbReference type="FunFam" id="3.50.50.60:FF:000036">
    <property type="entry name" value="NADPH:adrenodoxin oxidoreductase, mitochondrial"/>
    <property type="match status" value="1"/>
</dbReference>
<dbReference type="Gene3D" id="3.50.50.60">
    <property type="entry name" value="FAD/NAD(P)-binding domain"/>
    <property type="match status" value="1"/>
</dbReference>
<dbReference type="Gene3D" id="3.40.50.720">
    <property type="entry name" value="NAD(P)-binding Rossmann-like Domain"/>
    <property type="match status" value="1"/>
</dbReference>
<dbReference type="InterPro" id="IPR036188">
    <property type="entry name" value="FAD/NAD-bd_sf"/>
</dbReference>
<dbReference type="InterPro" id="IPR023753">
    <property type="entry name" value="FAD/NAD-binding_dom"/>
</dbReference>
<dbReference type="InterPro" id="IPR055275">
    <property type="entry name" value="Ferredox_Rdtase"/>
</dbReference>
<dbReference type="InterPro" id="IPR021163">
    <property type="entry name" value="Ferredox_Rdtase_adrenod"/>
</dbReference>
<dbReference type="PANTHER" id="PTHR48467">
    <property type="entry name" value="GLUTAMATE SYNTHASE 1 [NADH], CHLOROPLASTIC-LIKE"/>
    <property type="match status" value="1"/>
</dbReference>
<dbReference type="PANTHER" id="PTHR48467:SF1">
    <property type="entry name" value="GLUTAMATE SYNTHASE 1 [NADH], CHLOROPLASTIC-LIKE"/>
    <property type="match status" value="1"/>
</dbReference>
<dbReference type="Pfam" id="PF07992">
    <property type="entry name" value="Pyr_redox_2"/>
    <property type="match status" value="1"/>
</dbReference>
<dbReference type="PIRSF" id="PIRSF000362">
    <property type="entry name" value="FNR"/>
    <property type="match status" value="1"/>
</dbReference>
<dbReference type="PRINTS" id="PR00419">
    <property type="entry name" value="ADXRDTASE"/>
</dbReference>
<dbReference type="SUPFAM" id="SSF51905">
    <property type="entry name" value="FAD/NAD(P)-binding domain"/>
    <property type="match status" value="1"/>
</dbReference>
<dbReference type="SUPFAM" id="SSF51971">
    <property type="entry name" value="Nucleotide-binding domain"/>
    <property type="match status" value="2"/>
</dbReference>
<reference key="1">
    <citation type="journal article" date="1995" name="Biochim. Biophys. Acta">
        <title>cDNA cloning of mouse ferredoxin reductase from kidney.</title>
        <authorList>
            <person name="Itoh S."/>
            <person name="Iemura O."/>
            <person name="Yamada E."/>
            <person name="Yoshimura T."/>
            <person name="Tsujikawa K."/>
            <person name="Kohama Y."/>
            <person name="Mimura T."/>
        </authorList>
    </citation>
    <scope>NUCLEOTIDE SEQUENCE [MRNA]</scope>
    <scope>TISSUE SPECIFICITY</scope>
    <source>
        <strain>C57BL/6J</strain>
        <tissue>Kidney</tissue>
    </source>
</reference>
<reference key="2">
    <citation type="journal article" date="2010" name="Cell">
        <title>A tissue-specific atlas of mouse protein phosphorylation and expression.</title>
        <authorList>
            <person name="Huttlin E.L."/>
            <person name="Jedrychowski M.P."/>
            <person name="Elias J.E."/>
            <person name="Goswami T."/>
            <person name="Rad R."/>
            <person name="Beausoleil S.A."/>
            <person name="Villen J."/>
            <person name="Haas W."/>
            <person name="Sowa M.E."/>
            <person name="Gygi S.P."/>
        </authorList>
    </citation>
    <scope>IDENTIFICATION BY MASS SPECTROMETRY [LARGE SCALE ANALYSIS]</scope>
    <source>
        <tissue>Brown adipose tissue</tissue>
        <tissue>Liver</tissue>
        <tissue>Pancreas</tissue>
        <tissue>Spleen</tissue>
        <tissue>Testis</tissue>
    </source>
</reference>
<reference key="3">
    <citation type="journal article" date="2017" name="Hum. Mol. Genet.">
        <title>Biallelic mutations in the ferredoxin reductase gene cause novel mitochondriopathy with optic atrophy.</title>
        <authorList>
            <person name="Peng Y."/>
            <person name="Shinde D.N."/>
            <person name="Valencia C.A."/>
            <person name="Mo J.S."/>
            <person name="Rosenfeld J."/>
            <person name="Truitt Cho M."/>
            <person name="Chamberlin A."/>
            <person name="Li Z."/>
            <person name="Liu J."/>
            <person name="Gui B."/>
            <person name="Brockhage R."/>
            <person name="Basinger A."/>
            <person name="Alvarez-Leon B."/>
            <person name="Heydemann P."/>
            <person name="Magoulas P.L."/>
            <person name="Lewis A.M."/>
            <person name="Scaglia F."/>
            <person name="Gril S."/>
            <person name="Chong S.C."/>
            <person name="Bower M."/>
            <person name="Monaghan K.G."/>
            <person name="Willaert R."/>
            <person name="Plona M.R."/>
            <person name="Dineen R."/>
            <person name="Milan F."/>
            <person name="Hoganson G."/>
            <person name="Powis Z."/>
            <person name="Helbig K.L."/>
            <person name="Keller-Ramey J."/>
            <person name="Harris B."/>
            <person name="Anderson L.C."/>
            <person name="Green T."/>
            <person name="Sukoff Rizzo S.J."/>
            <person name="Kaylor J."/>
            <person name="Chen J."/>
            <person name="Guan M.X."/>
            <person name="Sellars E."/>
            <person name="Sparagana S.P."/>
            <person name="Gibson J.B."/>
            <person name="Reinholdt L.G."/>
            <person name="Tang S."/>
            <person name="Huang T."/>
        </authorList>
    </citation>
    <scope>MUTAGENESIS OF ARG-389</scope>
</reference>
<reference key="4">
    <citation type="journal article" date="2018" name="Hum. Mol. Genet.">
        <authorList>
            <person name="Peng Y."/>
            <person name="Shinde D.N."/>
            <person name="Alexander Valencia C."/>
            <person name="Mo J.S."/>
            <person name="Rosenfeld J."/>
            <person name="Cho M.T."/>
            <person name="Chamberlin A."/>
            <person name="Li Z."/>
            <person name="Liu J."/>
            <person name="Gui B."/>
        </authorList>
    </citation>
    <scope>ERRATUM OF PUBMED:29040572</scope>
</reference>
<gene>
    <name type="primary">Fdxr</name>
</gene>
<comment type="function">
    <text evidence="1 2">Serves as the first electron transfer protein in all the mitochondrial P450 systems including cholesterol side chain cleavage in all steroidogenic tissues, steroid 11-beta hydroxylation in the adrenal cortex, 25-OH-vitamin D3-24 hydroxylation in the kidney, and sterol C-27 hydroxylation in the liver (By similarity). Also acts as a ferredoxin--NADP(+) reductase essential for coenzyme Q biosynthesis: together with FDX2, transfers the electrons required for the hydroxylation reaction performed by COQ6 (By similarity).</text>
</comment>
<comment type="catalytic activity">
    <reaction evidence="1">
        <text>2 reduced [adrenodoxin] + NADP(+) + H(+) = 2 oxidized [adrenodoxin] + NADPH</text>
        <dbReference type="Rhea" id="RHEA:42312"/>
        <dbReference type="Rhea" id="RHEA-COMP:9998"/>
        <dbReference type="Rhea" id="RHEA-COMP:9999"/>
        <dbReference type="ChEBI" id="CHEBI:15378"/>
        <dbReference type="ChEBI" id="CHEBI:33737"/>
        <dbReference type="ChEBI" id="CHEBI:33738"/>
        <dbReference type="ChEBI" id="CHEBI:57783"/>
        <dbReference type="ChEBI" id="CHEBI:58349"/>
        <dbReference type="EC" id="1.18.1.6"/>
    </reaction>
</comment>
<comment type="catalytic activity">
    <reaction evidence="2">
        <text>2 reduced [2Fe-2S]-[ferredoxin] + NADP(+) + H(+) = 2 oxidized [2Fe-2S]-[ferredoxin] + NADPH</text>
        <dbReference type="Rhea" id="RHEA:20125"/>
        <dbReference type="Rhea" id="RHEA-COMP:10000"/>
        <dbReference type="Rhea" id="RHEA-COMP:10001"/>
        <dbReference type="ChEBI" id="CHEBI:15378"/>
        <dbReference type="ChEBI" id="CHEBI:33737"/>
        <dbReference type="ChEBI" id="CHEBI:33738"/>
        <dbReference type="ChEBI" id="CHEBI:57783"/>
        <dbReference type="ChEBI" id="CHEBI:58349"/>
    </reaction>
</comment>
<comment type="cofactor">
    <cofactor evidence="1">
        <name>FAD</name>
        <dbReference type="ChEBI" id="CHEBI:57692"/>
    </cofactor>
</comment>
<comment type="pathway">
    <text>Steroid metabolism; cholesterol metabolism.</text>
</comment>
<comment type="subunit">
    <text evidence="1">Monomer. Interacts directly with FDX1.</text>
</comment>
<comment type="subcellular location">
    <subcellularLocation>
        <location evidence="3">Mitochondrion inner membrane</location>
        <topology evidence="6">Peripheral membrane protein</topology>
    </subcellularLocation>
</comment>
<comment type="tissue specificity">
    <text evidence="5">Expressed in the adrenal, testis and ovary and to a lesser extent in the liver and kidney.</text>
</comment>
<comment type="similarity">
    <text evidence="6">Belongs to the ferredoxin--NADP reductase type 1 family.</text>
</comment>